<feature type="chain" id="PRO_0000273628" description="DNA-directed RNA polymerase subunit beta">
    <location>
        <begin position="1"/>
        <end position="1234"/>
    </location>
</feature>
<sequence>MVHPVQVGKRTRMSFAKVKDVAEMPNLIEIQLDSYKWFLDAGLYEVFDDINPISNFTGNLVLEFVGYTLDMDNIKYSVEECKERDTTYAAPLKVAVRLQNKETGEIKEQEVFMGDFPLMTEQGTFIINGAERVIVSQLVRSPGVYYNYNVDKTGKKLFSATVIPNRGAWLEYETDSNDVIYVRIDKTRKLPISILGRAMGFGSDQELLEYFGEEERFKATIEKDNTKTKEEALLEIYKRLRPGEPPTVDSAISLIDSLFFDAKRYDLSRVGRYKFNKKLAIGLRIANQIAAEDIVDKLTGEVLVAKGEKISRANAEEIQNRGINSVDVLVEDRVIRIIGNHFVDIHKCVDFDISDLNIRELVHYPTLREILDNYSDEETIKEEIKKNMTRLIPKHIIKDDIFATISYQIGLAYNIGYVDDIDHLGNRRLRSVGELLQNQFRIGLSRMERVVKERMTIQDQEAITPQQLINIRPVAAAIKEFFGSSQLSQFMDQTNPLSELTHKRRLSALGPGGLSRERAGFEVRDVHHSHYGRMCPIETPEGPNIGLINSLATYAKVNEYGFIETPYRVVDKAEGRVTGEIRYFTADEEDQYLVAQANEPLDENGCFIDKKVTVRDKGEVLVVPSKDVDLMDVSPRQLVSVATAMIPFLENDDASRALMGSNMQRQAVPLLKPYAPIVGTGIEYKAAVDSGVLPKAKNAGEVVYVSANEVRVKRELDGGVDTYRLLKFKRSNQGTCINQRPIVAKGDWVLKGEVLADGPSTDLGEIALGKNIRMGFITWEGYNYEDAMLISEELVREDVFTSIHIEEYECEARDTKLGPEEITRDIPNVSEDALKDIDERGIIRIGAEVRSGDILVGKVTPKGETELTAEERLLRAIFGEKAREVRDTSLRVPHGEAGIIVDVKVFTRENGDDLSPGVNELVRCYIAQKRKISVGDKMAGRHGNKGVISRVLPEEDMPFLPDGRPLQICLNPLGVPSRMNIGQVLEVHLGWAASALGWHIATPVFDGATETDIEDCLEKAGYNRNGKTVLRDGRTGEEFDNEVTVGIMYILKLAHLVDDKIHARSTGPYSLVTQQPLGGKAQFGGQRFGEMEVWALEAYGAAHTLQEILTVKSDDVVGRVKTYEAIVKGENIPEPGVPESFKVLIKELQALCLDVKVLNDNNQEVKFKELAEDDDEIEVLEVNMEGTEDSTTEEAKEEKGEAYIPAEEIDEEIDYENIDLLDFTSDLDIEDDFN</sequence>
<reference key="1">
    <citation type="submission" date="2001-02" db="EMBL/GenBank/DDBJ databases">
        <title>Clostridium perfringens RNA polymerase genes.</title>
        <authorList>
            <person name="Katayama S."/>
        </authorList>
    </citation>
    <scope>NUCLEOTIDE SEQUENCE [GENOMIC DNA]</scope>
</reference>
<reference key="2">
    <citation type="journal article" date="2006" name="Genome Res.">
        <title>Skewed genomic variability in strains of the toxigenic bacterial pathogen, Clostridium perfringens.</title>
        <authorList>
            <person name="Myers G.S.A."/>
            <person name="Rasko D.A."/>
            <person name="Cheung J.K."/>
            <person name="Ravel J."/>
            <person name="Seshadri R."/>
            <person name="DeBoy R.T."/>
            <person name="Ren Q."/>
            <person name="Varga J."/>
            <person name="Awad M.M."/>
            <person name="Brinkac L.M."/>
            <person name="Daugherty S.C."/>
            <person name="Haft D.H."/>
            <person name="Dodson R.J."/>
            <person name="Madupu R."/>
            <person name="Nelson W.C."/>
            <person name="Rosovitz M.J."/>
            <person name="Sullivan S.A."/>
            <person name="Khouri H."/>
            <person name="Dimitrov G.I."/>
            <person name="Watkins K.L."/>
            <person name="Mulligan S."/>
            <person name="Benton J."/>
            <person name="Radune D."/>
            <person name="Fisher D.J."/>
            <person name="Atkins H.S."/>
            <person name="Hiscox T."/>
            <person name="Jost B.H."/>
            <person name="Billington S.J."/>
            <person name="Songer J.G."/>
            <person name="McClane B.A."/>
            <person name="Titball R.W."/>
            <person name="Rood J.I."/>
            <person name="Melville S.B."/>
            <person name="Paulsen I.T."/>
        </authorList>
    </citation>
    <scope>NUCLEOTIDE SEQUENCE [LARGE SCALE GENOMIC DNA]</scope>
    <source>
        <strain>ATCC 13124 / DSM 756 / JCM 1290 / NCIMB 6125 / NCTC 8237 / S 107 / Type A</strain>
    </source>
</reference>
<dbReference type="EC" id="2.7.7.6" evidence="1"/>
<dbReference type="EMBL" id="AB055810">
    <property type="protein sequence ID" value="BAB62884.1"/>
    <property type="molecule type" value="Genomic_DNA"/>
</dbReference>
<dbReference type="EMBL" id="CP000246">
    <property type="protein sequence ID" value="ABG82867.1"/>
    <property type="molecule type" value="Genomic_DNA"/>
</dbReference>
<dbReference type="RefSeq" id="WP_003460611.1">
    <property type="nucleotide sequence ID" value="NC_008261.1"/>
</dbReference>
<dbReference type="SMR" id="Q0TMN8"/>
<dbReference type="STRING" id="195103.CPF_2722"/>
<dbReference type="PaxDb" id="195103-CPF_2722"/>
<dbReference type="GeneID" id="93001001"/>
<dbReference type="KEGG" id="cpf:CPF_2722"/>
<dbReference type="eggNOG" id="COG0085">
    <property type="taxonomic scope" value="Bacteria"/>
</dbReference>
<dbReference type="HOGENOM" id="CLU_000524_4_1_9"/>
<dbReference type="Proteomes" id="UP000001823">
    <property type="component" value="Chromosome"/>
</dbReference>
<dbReference type="GO" id="GO:0000428">
    <property type="term" value="C:DNA-directed RNA polymerase complex"/>
    <property type="evidence" value="ECO:0007669"/>
    <property type="project" value="UniProtKB-KW"/>
</dbReference>
<dbReference type="GO" id="GO:0003677">
    <property type="term" value="F:DNA binding"/>
    <property type="evidence" value="ECO:0007669"/>
    <property type="project" value="UniProtKB-UniRule"/>
</dbReference>
<dbReference type="GO" id="GO:0003899">
    <property type="term" value="F:DNA-directed RNA polymerase activity"/>
    <property type="evidence" value="ECO:0007669"/>
    <property type="project" value="UniProtKB-UniRule"/>
</dbReference>
<dbReference type="GO" id="GO:0032549">
    <property type="term" value="F:ribonucleoside binding"/>
    <property type="evidence" value="ECO:0007669"/>
    <property type="project" value="InterPro"/>
</dbReference>
<dbReference type="GO" id="GO:0006351">
    <property type="term" value="P:DNA-templated transcription"/>
    <property type="evidence" value="ECO:0007669"/>
    <property type="project" value="UniProtKB-UniRule"/>
</dbReference>
<dbReference type="CDD" id="cd00653">
    <property type="entry name" value="RNA_pol_B_RPB2"/>
    <property type="match status" value="1"/>
</dbReference>
<dbReference type="FunFam" id="3.90.1800.10:FF:000001">
    <property type="entry name" value="DNA-directed RNA polymerase subunit beta"/>
    <property type="match status" value="1"/>
</dbReference>
<dbReference type="Gene3D" id="2.40.50.100">
    <property type="match status" value="1"/>
</dbReference>
<dbReference type="Gene3D" id="2.40.50.150">
    <property type="match status" value="1"/>
</dbReference>
<dbReference type="Gene3D" id="3.90.1100.10">
    <property type="match status" value="2"/>
</dbReference>
<dbReference type="Gene3D" id="2.40.270.10">
    <property type="entry name" value="DNA-directed RNA polymerase, subunit 2, domain 6"/>
    <property type="match status" value="1"/>
</dbReference>
<dbReference type="Gene3D" id="3.90.1800.10">
    <property type="entry name" value="RNA polymerase alpha subunit dimerisation domain"/>
    <property type="match status" value="1"/>
</dbReference>
<dbReference type="Gene3D" id="3.90.1110.10">
    <property type="entry name" value="RNA polymerase Rpb2, domain 2"/>
    <property type="match status" value="1"/>
</dbReference>
<dbReference type="HAMAP" id="MF_01321">
    <property type="entry name" value="RNApol_bact_RpoB"/>
    <property type="match status" value="1"/>
</dbReference>
<dbReference type="InterPro" id="IPR019462">
    <property type="entry name" value="DNA-dir_RNA_pol_bsu_external_1"/>
</dbReference>
<dbReference type="InterPro" id="IPR015712">
    <property type="entry name" value="DNA-dir_RNA_pol_su2"/>
</dbReference>
<dbReference type="InterPro" id="IPR007120">
    <property type="entry name" value="DNA-dir_RNAP_su2_dom"/>
</dbReference>
<dbReference type="InterPro" id="IPR037033">
    <property type="entry name" value="DNA-dir_RNAP_su2_hyb_sf"/>
</dbReference>
<dbReference type="InterPro" id="IPR010243">
    <property type="entry name" value="RNA_pol_bsu_bac"/>
</dbReference>
<dbReference type="InterPro" id="IPR007121">
    <property type="entry name" value="RNA_pol_bsu_CS"/>
</dbReference>
<dbReference type="InterPro" id="IPR007644">
    <property type="entry name" value="RNA_pol_bsu_protrusion"/>
</dbReference>
<dbReference type="InterPro" id="IPR007642">
    <property type="entry name" value="RNA_pol_Rpb2_2"/>
</dbReference>
<dbReference type="InterPro" id="IPR037034">
    <property type="entry name" value="RNA_pol_Rpb2_2_sf"/>
</dbReference>
<dbReference type="InterPro" id="IPR007645">
    <property type="entry name" value="RNA_pol_Rpb2_3"/>
</dbReference>
<dbReference type="InterPro" id="IPR007641">
    <property type="entry name" value="RNA_pol_Rpb2_7"/>
</dbReference>
<dbReference type="InterPro" id="IPR014724">
    <property type="entry name" value="RNA_pol_RPB2_OB-fold"/>
</dbReference>
<dbReference type="NCBIfam" id="NF001616">
    <property type="entry name" value="PRK00405.1"/>
    <property type="match status" value="1"/>
</dbReference>
<dbReference type="NCBIfam" id="TIGR02013">
    <property type="entry name" value="rpoB"/>
    <property type="match status" value="1"/>
</dbReference>
<dbReference type="PANTHER" id="PTHR20856">
    <property type="entry name" value="DNA-DIRECTED RNA POLYMERASE I SUBUNIT 2"/>
    <property type="match status" value="1"/>
</dbReference>
<dbReference type="Pfam" id="PF04563">
    <property type="entry name" value="RNA_pol_Rpb2_1"/>
    <property type="match status" value="1"/>
</dbReference>
<dbReference type="Pfam" id="PF04561">
    <property type="entry name" value="RNA_pol_Rpb2_2"/>
    <property type="match status" value="2"/>
</dbReference>
<dbReference type="Pfam" id="PF04565">
    <property type="entry name" value="RNA_pol_Rpb2_3"/>
    <property type="match status" value="1"/>
</dbReference>
<dbReference type="Pfam" id="PF10385">
    <property type="entry name" value="RNA_pol_Rpb2_45"/>
    <property type="match status" value="1"/>
</dbReference>
<dbReference type="Pfam" id="PF00562">
    <property type="entry name" value="RNA_pol_Rpb2_6"/>
    <property type="match status" value="1"/>
</dbReference>
<dbReference type="Pfam" id="PF04560">
    <property type="entry name" value="RNA_pol_Rpb2_7"/>
    <property type="match status" value="1"/>
</dbReference>
<dbReference type="SUPFAM" id="SSF64484">
    <property type="entry name" value="beta and beta-prime subunits of DNA dependent RNA-polymerase"/>
    <property type="match status" value="1"/>
</dbReference>
<dbReference type="PROSITE" id="PS01166">
    <property type="entry name" value="RNA_POL_BETA"/>
    <property type="match status" value="1"/>
</dbReference>
<accession>Q0TMN8</accession>
<accession>Q93R88</accession>
<organism>
    <name type="scientific">Clostridium perfringens (strain ATCC 13124 / DSM 756 / JCM 1290 / NCIMB 6125 / NCTC 8237 / Type A)</name>
    <dbReference type="NCBI Taxonomy" id="195103"/>
    <lineage>
        <taxon>Bacteria</taxon>
        <taxon>Bacillati</taxon>
        <taxon>Bacillota</taxon>
        <taxon>Clostridia</taxon>
        <taxon>Eubacteriales</taxon>
        <taxon>Clostridiaceae</taxon>
        <taxon>Clostridium</taxon>
    </lineage>
</organism>
<gene>
    <name evidence="1" type="primary">rpoB</name>
    <name type="ordered locus">CPF_2722</name>
</gene>
<protein>
    <recommendedName>
        <fullName evidence="1">DNA-directed RNA polymerase subunit beta</fullName>
        <shortName evidence="1">RNAP subunit beta</shortName>
        <ecNumber evidence="1">2.7.7.6</ecNumber>
    </recommendedName>
    <alternativeName>
        <fullName evidence="1">RNA polymerase subunit beta</fullName>
    </alternativeName>
    <alternativeName>
        <fullName evidence="1">Transcriptase subunit beta</fullName>
    </alternativeName>
</protein>
<comment type="function">
    <text evidence="1">DNA-dependent RNA polymerase catalyzes the transcription of DNA into RNA using the four ribonucleoside triphosphates as substrates.</text>
</comment>
<comment type="catalytic activity">
    <reaction evidence="1">
        <text>RNA(n) + a ribonucleoside 5'-triphosphate = RNA(n+1) + diphosphate</text>
        <dbReference type="Rhea" id="RHEA:21248"/>
        <dbReference type="Rhea" id="RHEA-COMP:14527"/>
        <dbReference type="Rhea" id="RHEA-COMP:17342"/>
        <dbReference type="ChEBI" id="CHEBI:33019"/>
        <dbReference type="ChEBI" id="CHEBI:61557"/>
        <dbReference type="ChEBI" id="CHEBI:140395"/>
        <dbReference type="EC" id="2.7.7.6"/>
    </reaction>
</comment>
<comment type="subunit">
    <text evidence="1">The RNAP catalytic core consists of 2 alpha, 1 beta, 1 beta' and 1 omega subunit. When a sigma factor is associated with the core the holoenzyme is formed, which can initiate transcription.</text>
</comment>
<comment type="similarity">
    <text evidence="1">Belongs to the RNA polymerase beta chain family.</text>
</comment>
<evidence type="ECO:0000255" key="1">
    <source>
        <dbReference type="HAMAP-Rule" id="MF_01321"/>
    </source>
</evidence>
<keyword id="KW-0240">DNA-directed RNA polymerase</keyword>
<keyword id="KW-0548">Nucleotidyltransferase</keyword>
<keyword id="KW-0804">Transcription</keyword>
<keyword id="KW-0808">Transferase</keyword>
<proteinExistence type="inferred from homology"/>
<name>RPOB_CLOP1</name>